<protein>
    <recommendedName>
        <fullName>Bifunctional methylenetetrahydrofolate dehydrogenase/cyclohydrolase, mitochondrial</fullName>
    </recommendedName>
    <domain>
        <recommendedName>
            <fullName>NAD-dependent methylenetetrahydrofolate dehydrogenase</fullName>
            <ecNumber evidence="3">1.5.1.15</ecNumber>
        </recommendedName>
    </domain>
    <domain>
        <recommendedName>
            <fullName>Methenyltetrahydrofolate cyclohydrolase</fullName>
            <ecNumber evidence="3">3.5.4.9</ecNumber>
        </recommendedName>
    </domain>
</protein>
<proteinExistence type="evidence at transcript level"/>
<comment type="function">
    <text evidence="2">Although its dehydrogenase activity is NAD-specific, it can also utilize NADP at a reduced efficiency.</text>
</comment>
<comment type="catalytic activity">
    <reaction evidence="3">
        <text>(6R)-5,10-methylene-5,6,7,8-tetrahydrofolate + NAD(+) = (6R)-5,10-methenyltetrahydrofolate + NADH</text>
        <dbReference type="Rhea" id="RHEA:22892"/>
        <dbReference type="ChEBI" id="CHEBI:15636"/>
        <dbReference type="ChEBI" id="CHEBI:57455"/>
        <dbReference type="ChEBI" id="CHEBI:57540"/>
        <dbReference type="ChEBI" id="CHEBI:57945"/>
        <dbReference type="EC" id="1.5.1.15"/>
    </reaction>
</comment>
<comment type="catalytic activity">
    <reaction evidence="3">
        <text>(6R)-5,10-methenyltetrahydrofolate + H2O = (6R)-10-formyltetrahydrofolate + H(+)</text>
        <dbReference type="Rhea" id="RHEA:23700"/>
        <dbReference type="ChEBI" id="CHEBI:15377"/>
        <dbReference type="ChEBI" id="CHEBI:15378"/>
        <dbReference type="ChEBI" id="CHEBI:57455"/>
        <dbReference type="ChEBI" id="CHEBI:195366"/>
        <dbReference type="EC" id="3.5.4.9"/>
    </reaction>
</comment>
<comment type="cofactor">
    <cofactor evidence="3">
        <name>Mg(2+)</name>
        <dbReference type="ChEBI" id="CHEBI:18420"/>
    </cofactor>
</comment>
<comment type="subcellular location">
    <subcellularLocation>
        <location evidence="1">Mitochondrion</location>
    </subcellularLocation>
</comment>
<comment type="similarity">
    <text evidence="5">Belongs to the tetrahydrofolate dehydrogenase/cyclohydrolase family.</text>
</comment>
<sequence length="337" mass="36411">MATALCPLRALGQTAFRPRTRRLHLSAPRADAVVISGRKLARQIRQEARHEVEQWVAAGNKRPHLSVVLVGENPASHSYVLNKTKAAADVGISSETILKPASITEEELLDLISKLNNDANVDGLLVQLPLPEHIDERKICNAVTPDKDVDGFHVINVGRMCLDQYSMLPATPWGVWEIIKRTGIPTLGKNVVVAGRSKNVGMPIAMLLHTDGRHERPGGDATVTISHRYTPKEQLKQHTIRADIVVAAAGIPNLITADMIKEGAAVIDVGITRVQDPITAKSRLVGDVDFEGVKKKASYITPVPGGVGPMTVAMLMKNTIIAAKKLLKPKALEALTA</sequence>
<organism>
    <name type="scientific">Gallus gallus</name>
    <name type="common">Chicken</name>
    <dbReference type="NCBI Taxonomy" id="9031"/>
    <lineage>
        <taxon>Eukaryota</taxon>
        <taxon>Metazoa</taxon>
        <taxon>Chordata</taxon>
        <taxon>Craniata</taxon>
        <taxon>Vertebrata</taxon>
        <taxon>Euteleostomi</taxon>
        <taxon>Archelosauria</taxon>
        <taxon>Archosauria</taxon>
        <taxon>Dinosauria</taxon>
        <taxon>Saurischia</taxon>
        <taxon>Theropoda</taxon>
        <taxon>Coelurosauria</taxon>
        <taxon>Aves</taxon>
        <taxon>Neognathae</taxon>
        <taxon>Galloanserae</taxon>
        <taxon>Galliformes</taxon>
        <taxon>Phasianidae</taxon>
        <taxon>Phasianinae</taxon>
        <taxon>Gallus</taxon>
    </lineage>
</organism>
<reference key="1">
    <citation type="journal article" date="2005" name="Genome Biol.">
        <title>Full-length cDNAs from chicken bursal lymphocytes to facilitate gene function analysis.</title>
        <authorList>
            <person name="Caldwell R.B."/>
            <person name="Kierzek A.M."/>
            <person name="Arakawa H."/>
            <person name="Bezzubov Y."/>
            <person name="Zaim J."/>
            <person name="Fiedler P."/>
            <person name="Kutter S."/>
            <person name="Blagodatski A."/>
            <person name="Kostovska D."/>
            <person name="Koter M."/>
            <person name="Plachy J."/>
            <person name="Carninci P."/>
            <person name="Hayashizaki Y."/>
            <person name="Buerstedde J.-M."/>
        </authorList>
    </citation>
    <scope>NUCLEOTIDE SEQUENCE [LARGE SCALE MRNA]</scope>
    <source>
        <strain>CB</strain>
        <tissue>Bursa of Fabricius</tissue>
    </source>
</reference>
<evidence type="ECO:0000250" key="1"/>
<evidence type="ECO:0000250" key="2">
    <source>
        <dbReference type="UniProtKB" id="P13995"/>
    </source>
</evidence>
<evidence type="ECO:0000250" key="3">
    <source>
        <dbReference type="UniProtKB" id="P18155"/>
    </source>
</evidence>
<evidence type="ECO:0000255" key="4"/>
<evidence type="ECO:0000305" key="5"/>
<feature type="transit peptide" description="Mitochondrion" evidence="4">
    <location>
        <begin position="1"/>
        <end position="30"/>
    </location>
</feature>
<feature type="chain" id="PRO_0000042885" description="Bifunctional methylenetetrahydrofolate dehydrogenase/cyclohydrolase, mitochondrial">
    <location>
        <begin position="31"/>
        <end position="337"/>
    </location>
</feature>
<feature type="binding site" evidence="2">
    <location>
        <begin position="79"/>
        <end position="83"/>
    </location>
    <ligand>
        <name>substrate</name>
    </ligand>
</feature>
<feature type="binding site" evidence="2">
    <location>
        <begin position="126"/>
        <end position="128"/>
    </location>
    <ligand>
        <name>substrate</name>
    </ligand>
</feature>
<feature type="binding site" evidence="2">
    <location>
        <begin position="195"/>
        <end position="197"/>
    </location>
    <ligand>
        <name>NAD(+)</name>
        <dbReference type="ChEBI" id="CHEBI:57540"/>
    </ligand>
</feature>
<feature type="binding site" evidence="2">
    <location>
        <position position="228"/>
    </location>
    <ligand>
        <name>NAD(+)</name>
        <dbReference type="ChEBI" id="CHEBI:57540"/>
    </ligand>
</feature>
<feature type="binding site" evidence="2">
    <location>
        <begin position="304"/>
        <end position="308"/>
    </location>
    <ligand>
        <name>substrate</name>
    </ligand>
</feature>
<name>MTDC_CHICK</name>
<gene>
    <name type="primary">MTHFD2</name>
    <name type="ORF">RCJMB04_12b8</name>
</gene>
<dbReference type="EC" id="1.5.1.15" evidence="3"/>
<dbReference type="EC" id="3.5.4.9" evidence="3"/>
<dbReference type="EMBL" id="AJ720179">
    <property type="protein sequence ID" value="CAG31838.1"/>
    <property type="molecule type" value="mRNA"/>
</dbReference>
<dbReference type="RefSeq" id="NP_001026531.1">
    <property type="nucleotide sequence ID" value="NM_001031360.1"/>
</dbReference>
<dbReference type="SMR" id="Q5ZKA5"/>
<dbReference type="BioGRID" id="685886">
    <property type="interactions" value="1"/>
</dbReference>
<dbReference type="FunCoup" id="Q5ZKA5">
    <property type="interactions" value="302"/>
</dbReference>
<dbReference type="STRING" id="9031.ENSGALP00000057027"/>
<dbReference type="PaxDb" id="9031-ENSGALP00000022034"/>
<dbReference type="GeneID" id="426126"/>
<dbReference type="KEGG" id="gga:426126"/>
<dbReference type="CTD" id="10797"/>
<dbReference type="VEuPathDB" id="HostDB:geneid_426126"/>
<dbReference type="eggNOG" id="KOG0089">
    <property type="taxonomic scope" value="Eukaryota"/>
</dbReference>
<dbReference type="InParanoid" id="Q5ZKA5"/>
<dbReference type="OrthoDB" id="5126881at2759"/>
<dbReference type="PhylomeDB" id="Q5ZKA5"/>
<dbReference type="PRO" id="PR:Q5ZKA5"/>
<dbReference type="Proteomes" id="UP000000539">
    <property type="component" value="Unassembled WGS sequence"/>
</dbReference>
<dbReference type="GO" id="GO:0005739">
    <property type="term" value="C:mitochondrion"/>
    <property type="evidence" value="ECO:0000318"/>
    <property type="project" value="GO_Central"/>
</dbReference>
<dbReference type="GO" id="GO:0000287">
    <property type="term" value="F:magnesium ion binding"/>
    <property type="evidence" value="ECO:0000250"/>
    <property type="project" value="UniProtKB"/>
</dbReference>
<dbReference type="GO" id="GO:0004477">
    <property type="term" value="F:methenyltetrahydrofolate cyclohydrolase activity"/>
    <property type="evidence" value="ECO:0000250"/>
    <property type="project" value="UniProtKB"/>
</dbReference>
<dbReference type="GO" id="GO:0004487">
    <property type="term" value="F:methylenetetrahydrofolate dehydrogenase (NAD+) activity"/>
    <property type="evidence" value="ECO:0000250"/>
    <property type="project" value="UniProtKB"/>
</dbReference>
<dbReference type="GO" id="GO:0004488">
    <property type="term" value="F:methylenetetrahydrofolate dehydrogenase (NADP+) activity"/>
    <property type="evidence" value="ECO:0000250"/>
    <property type="project" value="UniProtKB"/>
</dbReference>
<dbReference type="GO" id="GO:0042301">
    <property type="term" value="F:phosphate ion binding"/>
    <property type="evidence" value="ECO:0000250"/>
    <property type="project" value="UniProtKB"/>
</dbReference>
<dbReference type="GO" id="GO:0035999">
    <property type="term" value="P:tetrahydrofolate interconversion"/>
    <property type="evidence" value="ECO:0000318"/>
    <property type="project" value="GO_Central"/>
</dbReference>
<dbReference type="CDD" id="cd01080">
    <property type="entry name" value="NAD_bind_m-THF_DH_Cyclohyd"/>
    <property type="match status" value="1"/>
</dbReference>
<dbReference type="FunFam" id="3.40.50.10860:FF:000001">
    <property type="entry name" value="Bifunctional protein FolD"/>
    <property type="match status" value="1"/>
</dbReference>
<dbReference type="FunFam" id="3.40.50.720:FF:000070">
    <property type="entry name" value="probable bifunctional methylenetetrahydrofolate dehydrogenase/cyclohydrolase 2"/>
    <property type="match status" value="1"/>
</dbReference>
<dbReference type="Gene3D" id="3.40.50.10860">
    <property type="entry name" value="Leucine Dehydrogenase, chain A, domain 1"/>
    <property type="match status" value="1"/>
</dbReference>
<dbReference type="Gene3D" id="3.40.50.720">
    <property type="entry name" value="NAD(P)-binding Rossmann-like Domain"/>
    <property type="match status" value="1"/>
</dbReference>
<dbReference type="HAMAP" id="MF_01576">
    <property type="entry name" value="THF_DHG_CYH"/>
    <property type="match status" value="1"/>
</dbReference>
<dbReference type="InterPro" id="IPR046346">
    <property type="entry name" value="Aminoacid_DH-like_N_sf"/>
</dbReference>
<dbReference type="InterPro" id="IPR036291">
    <property type="entry name" value="NAD(P)-bd_dom_sf"/>
</dbReference>
<dbReference type="InterPro" id="IPR000672">
    <property type="entry name" value="THF_DH/CycHdrlase"/>
</dbReference>
<dbReference type="InterPro" id="IPR020630">
    <property type="entry name" value="THF_DH/CycHdrlase_cat_dom"/>
</dbReference>
<dbReference type="InterPro" id="IPR020867">
    <property type="entry name" value="THF_DH/CycHdrlase_CS"/>
</dbReference>
<dbReference type="InterPro" id="IPR020631">
    <property type="entry name" value="THF_DH/CycHdrlase_NAD-bd_dom"/>
</dbReference>
<dbReference type="PANTHER" id="PTHR48099:SF15">
    <property type="entry name" value="BIFUNCTIONAL METHYLENETETRAHYDROFOLATE DEHYDROGENASE_CYCLOHYDROLASE, MITOCHONDRIAL"/>
    <property type="match status" value="1"/>
</dbReference>
<dbReference type="PANTHER" id="PTHR48099">
    <property type="entry name" value="C-1-TETRAHYDROFOLATE SYNTHASE, CYTOPLASMIC-RELATED"/>
    <property type="match status" value="1"/>
</dbReference>
<dbReference type="Pfam" id="PF00763">
    <property type="entry name" value="THF_DHG_CYH"/>
    <property type="match status" value="1"/>
</dbReference>
<dbReference type="Pfam" id="PF02882">
    <property type="entry name" value="THF_DHG_CYH_C"/>
    <property type="match status" value="1"/>
</dbReference>
<dbReference type="PRINTS" id="PR00085">
    <property type="entry name" value="THFDHDRGNASE"/>
</dbReference>
<dbReference type="SUPFAM" id="SSF53223">
    <property type="entry name" value="Aminoacid dehydrogenase-like, N-terminal domain"/>
    <property type="match status" value="1"/>
</dbReference>
<dbReference type="SUPFAM" id="SSF51735">
    <property type="entry name" value="NAD(P)-binding Rossmann-fold domains"/>
    <property type="match status" value="1"/>
</dbReference>
<dbReference type="PROSITE" id="PS00766">
    <property type="entry name" value="THF_DHG_CYH_1"/>
    <property type="match status" value="1"/>
</dbReference>
<dbReference type="PROSITE" id="PS00767">
    <property type="entry name" value="THF_DHG_CYH_2"/>
    <property type="match status" value="1"/>
</dbReference>
<accession>Q5ZKA5</accession>
<keyword id="KW-0378">Hydrolase</keyword>
<keyword id="KW-0460">Magnesium</keyword>
<keyword id="KW-0496">Mitochondrion</keyword>
<keyword id="KW-0511">Multifunctional enzyme</keyword>
<keyword id="KW-0520">NAD</keyword>
<keyword id="KW-0521">NADP</keyword>
<keyword id="KW-0554">One-carbon metabolism</keyword>
<keyword id="KW-0560">Oxidoreductase</keyword>
<keyword id="KW-1185">Reference proteome</keyword>
<keyword id="KW-0809">Transit peptide</keyword>